<organism>
    <name type="scientific">Saccharomyces cerevisiae (strain ATCC 204508 / S288c)</name>
    <name type="common">Baker's yeast</name>
    <dbReference type="NCBI Taxonomy" id="559292"/>
    <lineage>
        <taxon>Eukaryota</taxon>
        <taxon>Fungi</taxon>
        <taxon>Dikarya</taxon>
        <taxon>Ascomycota</taxon>
        <taxon>Saccharomycotina</taxon>
        <taxon>Saccharomycetes</taxon>
        <taxon>Saccharomycetales</taxon>
        <taxon>Saccharomycetaceae</taxon>
        <taxon>Saccharomyces</taxon>
    </lineage>
</organism>
<comment type="miscellaneous">
    <text evidence="1">Partially overlaps STE18 and YJR088C.</text>
</comment>
<comment type="caution">
    <text evidence="2">Product of a dubious gene prediction unlikely to encode a functional protein. Because of that it is not part of the S.cerevisiae S288c complete/reference proteome set.</text>
</comment>
<proteinExistence type="uncertain"/>
<dbReference type="EMBL" id="Z49586">
    <property type="protein sequence ID" value="CAA89614.1"/>
    <property type="molecule type" value="Genomic_DNA"/>
</dbReference>
<dbReference type="EMBL" id="L47993">
    <property type="protein sequence ID" value="AAB39310.1"/>
    <property type="molecule type" value="Genomic_DNA"/>
</dbReference>
<dbReference type="PIR" id="S57106">
    <property type="entry name" value="S57106"/>
</dbReference>
<dbReference type="DIP" id="DIP-2114N"/>
<dbReference type="IntAct" id="P47132">
    <property type="interactions" value="2"/>
</dbReference>
<dbReference type="STRING" id="4932.YJR087W"/>
<dbReference type="PaxDb" id="4932-YJR087W"/>
<dbReference type="EnsemblFungi" id="YJR087W_mRNA">
    <property type="protein sequence ID" value="YJR087W"/>
    <property type="gene ID" value="YJR087W"/>
</dbReference>
<dbReference type="AGR" id="SGD:S000003847"/>
<dbReference type="SGD" id="S000003847">
    <property type="gene designation" value="YJR087W"/>
</dbReference>
<dbReference type="HOGENOM" id="CLU_2098746_0_0_1"/>
<dbReference type="ChiTaRS" id="YJR087W">
    <property type="organism name" value="yeast"/>
</dbReference>
<feature type="chain" id="PRO_0000203106" description="Putative uncharacterized protein YJR087W">
    <location>
        <begin position="1"/>
        <end position="116"/>
    </location>
</feature>
<name>YJ57_YEAST</name>
<gene>
    <name type="ordered locus">YJR087W</name>
    <name type="ORF">J1870</name>
</gene>
<protein>
    <recommendedName>
        <fullName>Putative uncharacterized protein YJR087W</fullName>
    </recommendedName>
</protein>
<sequence length="116" mass="13145">MIVIESKKKKNIHAFSYPLSPYLFFSSNFGSVHILFKINSAVILSLLLDFAEISFSFDADSLIKSFCLLRPSSREMMLTNAHPFRYSSLSSTLLKAFFNAFSKSSVLVCFLLRRAS</sequence>
<evidence type="ECO:0000305" key="1"/>
<evidence type="ECO:0000305" key="2">
    <source>
    </source>
</evidence>
<reference key="1">
    <citation type="journal article" date="1996" name="Yeast">
        <title>Analysis of a 62 kb DNA sequence of chromosome X reveals 36 open reading frames and a gene cluster with a counterpart on chromosome XI.</title>
        <authorList>
            <person name="Huang M.-E."/>
            <person name="Manus V."/>
            <person name="Chuat J.-C."/>
            <person name="Galibert F."/>
        </authorList>
    </citation>
    <scope>NUCLEOTIDE SEQUENCE [GENOMIC DNA]</scope>
    <source>
        <strain>ATCC 204508 / S288c</strain>
    </source>
</reference>
<reference key="2">
    <citation type="journal article" date="1996" name="EMBO J.">
        <title>Complete nucleotide sequence of Saccharomyces cerevisiae chromosome X.</title>
        <authorList>
            <person name="Galibert F."/>
            <person name="Alexandraki D."/>
            <person name="Baur A."/>
            <person name="Boles E."/>
            <person name="Chalwatzis N."/>
            <person name="Chuat J.-C."/>
            <person name="Coster F."/>
            <person name="Cziepluch C."/>
            <person name="de Haan M."/>
            <person name="Domdey H."/>
            <person name="Durand P."/>
            <person name="Entian K.-D."/>
            <person name="Gatius M."/>
            <person name="Goffeau A."/>
            <person name="Grivell L.A."/>
            <person name="Hennemann A."/>
            <person name="Herbert C.J."/>
            <person name="Heumann K."/>
            <person name="Hilger F."/>
            <person name="Hollenberg C.P."/>
            <person name="Huang M.-E."/>
            <person name="Jacq C."/>
            <person name="Jauniaux J.-C."/>
            <person name="Katsoulou C."/>
            <person name="Kirchrath L."/>
            <person name="Kleine K."/>
            <person name="Kordes E."/>
            <person name="Koetter P."/>
            <person name="Liebl S."/>
            <person name="Louis E.J."/>
            <person name="Manus V."/>
            <person name="Mewes H.-W."/>
            <person name="Miosga T."/>
            <person name="Obermaier B."/>
            <person name="Perea J."/>
            <person name="Pohl T.M."/>
            <person name="Portetelle D."/>
            <person name="Pujol A."/>
            <person name="Purnelle B."/>
            <person name="Ramezani Rad M."/>
            <person name="Rasmussen S.W."/>
            <person name="Rose M."/>
            <person name="Rossau R."/>
            <person name="Schaaff-Gerstenschlaeger I."/>
            <person name="Smits P.H.M."/>
            <person name="Scarcez T."/>
            <person name="Soriano N."/>
            <person name="To Van D."/>
            <person name="Tzermia M."/>
            <person name="Van Broekhoven A."/>
            <person name="Vandenbol M."/>
            <person name="Wedler H."/>
            <person name="von Wettstein D."/>
            <person name="Wambutt R."/>
            <person name="Zagulski M."/>
            <person name="Zollner A."/>
            <person name="Karpfinger-Hartl L."/>
        </authorList>
    </citation>
    <scope>NUCLEOTIDE SEQUENCE [LARGE SCALE GENOMIC DNA]</scope>
    <source>
        <strain>ATCC 204508 / S288c</strain>
    </source>
</reference>
<reference key="3">
    <citation type="journal article" date="2014" name="G3 (Bethesda)">
        <title>The reference genome sequence of Saccharomyces cerevisiae: Then and now.</title>
        <authorList>
            <person name="Engel S.R."/>
            <person name="Dietrich F.S."/>
            <person name="Fisk D.G."/>
            <person name="Binkley G."/>
            <person name="Balakrishnan R."/>
            <person name="Costanzo M.C."/>
            <person name="Dwight S.S."/>
            <person name="Hitz B.C."/>
            <person name="Karra K."/>
            <person name="Nash R.S."/>
            <person name="Weng S."/>
            <person name="Wong E.D."/>
            <person name="Lloyd P."/>
            <person name="Skrzypek M.S."/>
            <person name="Miyasato S.R."/>
            <person name="Simison M."/>
            <person name="Cherry J.M."/>
        </authorList>
    </citation>
    <scope>GENOME REANNOTATION</scope>
    <source>
        <strain>ATCC 204508 / S288c</strain>
    </source>
</reference>
<accession>P47132</accession>